<organism>
    <name type="scientific">Frankia casuarinae (strain DSM 45818 / CECT 9043 / HFP020203 / CcI3)</name>
    <dbReference type="NCBI Taxonomy" id="106370"/>
    <lineage>
        <taxon>Bacteria</taxon>
        <taxon>Bacillati</taxon>
        <taxon>Actinomycetota</taxon>
        <taxon>Actinomycetes</taxon>
        <taxon>Frankiales</taxon>
        <taxon>Frankiaceae</taxon>
        <taxon>Frankia</taxon>
    </lineage>
</organism>
<comment type="function">
    <text evidence="1">Cell wall formation. Catalyzes the addition of glutamate to the nucleotide precursor UDP-N-acetylmuramoyl-L-alanine (UMA).</text>
</comment>
<comment type="catalytic activity">
    <reaction evidence="1">
        <text>UDP-N-acetyl-alpha-D-muramoyl-L-alanine + D-glutamate + ATP = UDP-N-acetyl-alpha-D-muramoyl-L-alanyl-D-glutamate + ADP + phosphate + H(+)</text>
        <dbReference type="Rhea" id="RHEA:16429"/>
        <dbReference type="ChEBI" id="CHEBI:15378"/>
        <dbReference type="ChEBI" id="CHEBI:29986"/>
        <dbReference type="ChEBI" id="CHEBI:30616"/>
        <dbReference type="ChEBI" id="CHEBI:43474"/>
        <dbReference type="ChEBI" id="CHEBI:83898"/>
        <dbReference type="ChEBI" id="CHEBI:83900"/>
        <dbReference type="ChEBI" id="CHEBI:456216"/>
        <dbReference type="EC" id="6.3.2.9"/>
    </reaction>
</comment>
<comment type="pathway">
    <text evidence="1">Cell wall biogenesis; peptidoglycan biosynthesis.</text>
</comment>
<comment type="subcellular location">
    <subcellularLocation>
        <location evidence="1">Cytoplasm</location>
    </subcellularLocation>
</comment>
<comment type="similarity">
    <text evidence="1">Belongs to the MurCDEF family.</text>
</comment>
<keyword id="KW-0067">ATP-binding</keyword>
<keyword id="KW-0131">Cell cycle</keyword>
<keyword id="KW-0132">Cell division</keyword>
<keyword id="KW-0133">Cell shape</keyword>
<keyword id="KW-0961">Cell wall biogenesis/degradation</keyword>
<keyword id="KW-0963">Cytoplasm</keyword>
<keyword id="KW-0436">Ligase</keyword>
<keyword id="KW-0547">Nucleotide-binding</keyword>
<keyword id="KW-0573">Peptidoglycan synthesis</keyword>
<keyword id="KW-1185">Reference proteome</keyword>
<accession>Q2JD52</accession>
<dbReference type="EC" id="6.3.2.9" evidence="1"/>
<dbReference type="EMBL" id="CP000249">
    <property type="protein sequence ID" value="ABD10790.1"/>
    <property type="molecule type" value="Genomic_DNA"/>
</dbReference>
<dbReference type="RefSeq" id="WP_011435855.1">
    <property type="nucleotide sequence ID" value="NZ_MSEA01000636.1"/>
</dbReference>
<dbReference type="SMR" id="Q2JD52"/>
<dbReference type="STRING" id="106370.Francci3_1413"/>
<dbReference type="KEGG" id="fra:Francci3_1413"/>
<dbReference type="eggNOG" id="COG0771">
    <property type="taxonomic scope" value="Bacteria"/>
</dbReference>
<dbReference type="HOGENOM" id="CLU_032540_0_0_11"/>
<dbReference type="OrthoDB" id="9809796at2"/>
<dbReference type="PhylomeDB" id="Q2JD52"/>
<dbReference type="UniPathway" id="UPA00219"/>
<dbReference type="Proteomes" id="UP000001937">
    <property type="component" value="Chromosome"/>
</dbReference>
<dbReference type="GO" id="GO:0005737">
    <property type="term" value="C:cytoplasm"/>
    <property type="evidence" value="ECO:0007669"/>
    <property type="project" value="UniProtKB-SubCell"/>
</dbReference>
<dbReference type="GO" id="GO:0005524">
    <property type="term" value="F:ATP binding"/>
    <property type="evidence" value="ECO:0007669"/>
    <property type="project" value="UniProtKB-UniRule"/>
</dbReference>
<dbReference type="GO" id="GO:0008764">
    <property type="term" value="F:UDP-N-acetylmuramoylalanine-D-glutamate ligase activity"/>
    <property type="evidence" value="ECO:0007669"/>
    <property type="project" value="UniProtKB-UniRule"/>
</dbReference>
<dbReference type="GO" id="GO:0051301">
    <property type="term" value="P:cell division"/>
    <property type="evidence" value="ECO:0007669"/>
    <property type="project" value="UniProtKB-KW"/>
</dbReference>
<dbReference type="GO" id="GO:0071555">
    <property type="term" value="P:cell wall organization"/>
    <property type="evidence" value="ECO:0007669"/>
    <property type="project" value="UniProtKB-KW"/>
</dbReference>
<dbReference type="GO" id="GO:0009252">
    <property type="term" value="P:peptidoglycan biosynthetic process"/>
    <property type="evidence" value="ECO:0007669"/>
    <property type="project" value="UniProtKB-UniRule"/>
</dbReference>
<dbReference type="GO" id="GO:0008360">
    <property type="term" value="P:regulation of cell shape"/>
    <property type="evidence" value="ECO:0007669"/>
    <property type="project" value="UniProtKB-KW"/>
</dbReference>
<dbReference type="Gene3D" id="3.90.190.20">
    <property type="entry name" value="Mur ligase, C-terminal domain"/>
    <property type="match status" value="1"/>
</dbReference>
<dbReference type="Gene3D" id="3.40.1190.10">
    <property type="entry name" value="Mur-like, catalytic domain"/>
    <property type="match status" value="1"/>
</dbReference>
<dbReference type="Gene3D" id="3.40.50.720">
    <property type="entry name" value="NAD(P)-binding Rossmann-like Domain"/>
    <property type="match status" value="1"/>
</dbReference>
<dbReference type="HAMAP" id="MF_00639">
    <property type="entry name" value="MurD"/>
    <property type="match status" value="1"/>
</dbReference>
<dbReference type="InterPro" id="IPR036565">
    <property type="entry name" value="Mur-like_cat_sf"/>
</dbReference>
<dbReference type="InterPro" id="IPR004101">
    <property type="entry name" value="Mur_ligase_C"/>
</dbReference>
<dbReference type="InterPro" id="IPR036615">
    <property type="entry name" value="Mur_ligase_C_dom_sf"/>
</dbReference>
<dbReference type="InterPro" id="IPR013221">
    <property type="entry name" value="Mur_ligase_cen"/>
</dbReference>
<dbReference type="InterPro" id="IPR005762">
    <property type="entry name" value="MurD"/>
</dbReference>
<dbReference type="NCBIfam" id="TIGR01087">
    <property type="entry name" value="murD"/>
    <property type="match status" value="1"/>
</dbReference>
<dbReference type="PANTHER" id="PTHR43692">
    <property type="entry name" value="UDP-N-ACETYLMURAMOYLALANINE--D-GLUTAMATE LIGASE"/>
    <property type="match status" value="1"/>
</dbReference>
<dbReference type="PANTHER" id="PTHR43692:SF1">
    <property type="entry name" value="UDP-N-ACETYLMURAMOYLALANINE--D-GLUTAMATE LIGASE"/>
    <property type="match status" value="1"/>
</dbReference>
<dbReference type="Pfam" id="PF02875">
    <property type="entry name" value="Mur_ligase_C"/>
    <property type="match status" value="1"/>
</dbReference>
<dbReference type="Pfam" id="PF08245">
    <property type="entry name" value="Mur_ligase_M"/>
    <property type="match status" value="1"/>
</dbReference>
<dbReference type="Pfam" id="PF21799">
    <property type="entry name" value="MurD-like_N"/>
    <property type="match status" value="1"/>
</dbReference>
<dbReference type="SUPFAM" id="SSF51984">
    <property type="entry name" value="MurCD N-terminal domain"/>
    <property type="match status" value="1"/>
</dbReference>
<dbReference type="SUPFAM" id="SSF53623">
    <property type="entry name" value="MurD-like peptide ligases, catalytic domain"/>
    <property type="match status" value="1"/>
</dbReference>
<dbReference type="SUPFAM" id="SSF53244">
    <property type="entry name" value="MurD-like peptide ligases, peptide-binding domain"/>
    <property type="match status" value="1"/>
</dbReference>
<reference key="1">
    <citation type="journal article" date="2007" name="Genome Res.">
        <title>Genome characteristics of facultatively symbiotic Frankia sp. strains reflect host range and host plant biogeography.</title>
        <authorList>
            <person name="Normand P."/>
            <person name="Lapierre P."/>
            <person name="Tisa L.S."/>
            <person name="Gogarten J.P."/>
            <person name="Alloisio N."/>
            <person name="Bagnarol E."/>
            <person name="Bassi C.A."/>
            <person name="Berry A.M."/>
            <person name="Bickhart D.M."/>
            <person name="Choisne N."/>
            <person name="Couloux A."/>
            <person name="Cournoyer B."/>
            <person name="Cruveiller S."/>
            <person name="Daubin V."/>
            <person name="Demange N."/>
            <person name="Francino M.P."/>
            <person name="Goltsman E."/>
            <person name="Huang Y."/>
            <person name="Kopp O.R."/>
            <person name="Labarre L."/>
            <person name="Lapidus A."/>
            <person name="Lavire C."/>
            <person name="Marechal J."/>
            <person name="Martinez M."/>
            <person name="Mastronunzio J.E."/>
            <person name="Mullin B.C."/>
            <person name="Niemann J."/>
            <person name="Pujic P."/>
            <person name="Rawnsley T."/>
            <person name="Rouy Z."/>
            <person name="Schenowitz C."/>
            <person name="Sellstedt A."/>
            <person name="Tavares F."/>
            <person name="Tomkins J.P."/>
            <person name="Vallenet D."/>
            <person name="Valverde C."/>
            <person name="Wall L.G."/>
            <person name="Wang Y."/>
            <person name="Medigue C."/>
            <person name="Benson D.R."/>
        </authorList>
    </citation>
    <scope>NUCLEOTIDE SEQUENCE [LARGE SCALE GENOMIC DNA]</scope>
    <source>
        <strain>DSM 45818 / CECT 9043 / HFP020203 / CcI3</strain>
    </source>
</reference>
<sequence length="471" mass="47333">MTGDGQGPGDGQGPGNLTTSISWAGLPVLVVGIGVSGLAAARALLARGARVRVVDAGDSPRHQGAAATLRALGAEVNLGGLPAGPGDSALVVTSPGVPPTAPLITGAAGAGIPVWGEVELAWRWRGGSRWLAVTGTNGKTTTTEMLGAMLAAGGRRSTTAGNIGTPIVDAVAAEPPYETLAVELSSFQLHYTHTMAPLAAAVLNVAPDHLDWHGGAAAYAAAKAGIWRRPGTTAIGNADDATSADLLAAAPGRRVLFGLDPAARPRPGLTVVDGHLVDDAFGGGRLVAVRDLVLTSPHMISNALAAAALARAEGVGPAAIGAALVAFRPGAHRNAEVAVIDGVRWVDDSKATNPHAAAASLAGYPSVVWIAGGLNKGLAFDDLVRDARRVLRAAVLIGRCADEIAAALARHAPDVPVERADGMDDAVKAAAAFATTGDTVLLAPAAASMDMFRDYAARGDLFAAAVRAREG</sequence>
<protein>
    <recommendedName>
        <fullName evidence="1">UDP-N-acetylmuramoylalanine--D-glutamate ligase</fullName>
        <ecNumber evidence="1">6.3.2.9</ecNumber>
    </recommendedName>
    <alternativeName>
        <fullName evidence="1">D-glutamic acid-adding enzyme</fullName>
    </alternativeName>
    <alternativeName>
        <fullName evidence="1">UDP-N-acetylmuramoyl-L-alanyl-D-glutamate synthetase</fullName>
    </alternativeName>
</protein>
<name>MURD_FRACC</name>
<feature type="chain" id="PRO_0000257192" description="UDP-N-acetylmuramoylalanine--D-glutamate ligase">
    <location>
        <begin position="1"/>
        <end position="471"/>
    </location>
</feature>
<feature type="binding site" evidence="1">
    <location>
        <begin position="135"/>
        <end position="141"/>
    </location>
    <ligand>
        <name>ATP</name>
        <dbReference type="ChEBI" id="CHEBI:30616"/>
    </ligand>
</feature>
<evidence type="ECO:0000255" key="1">
    <source>
        <dbReference type="HAMAP-Rule" id="MF_00639"/>
    </source>
</evidence>
<proteinExistence type="inferred from homology"/>
<gene>
    <name evidence="1" type="primary">murD</name>
    <name type="ordered locus">Francci3_1413</name>
</gene>